<name>PSBZ_PORPU</name>
<gene>
    <name evidence="1" type="primary">psbZ</name>
    <name type="synonym">ycf9</name>
</gene>
<proteinExistence type="inferred from homology"/>
<protein>
    <recommendedName>
        <fullName evidence="1">Photosystem II reaction center protein Z</fullName>
        <shortName evidence="1">PSII-Z</shortName>
    </recommendedName>
</protein>
<keyword id="KW-0150">Chloroplast</keyword>
<keyword id="KW-0472">Membrane</keyword>
<keyword id="KW-0602">Photosynthesis</keyword>
<keyword id="KW-0604">Photosystem II</keyword>
<keyword id="KW-0934">Plastid</keyword>
<keyword id="KW-0674">Reaction center</keyword>
<keyword id="KW-0793">Thylakoid</keyword>
<keyword id="KW-0812">Transmembrane</keyword>
<keyword id="KW-1133">Transmembrane helix</keyword>
<organism>
    <name type="scientific">Porphyra purpurea</name>
    <name type="common">Red seaweed</name>
    <name type="synonym">Ulva purpurea</name>
    <dbReference type="NCBI Taxonomy" id="2787"/>
    <lineage>
        <taxon>Eukaryota</taxon>
        <taxon>Rhodophyta</taxon>
        <taxon>Bangiophyceae</taxon>
        <taxon>Bangiales</taxon>
        <taxon>Bangiaceae</taxon>
        <taxon>Porphyra</taxon>
    </lineage>
</organism>
<geneLocation type="chloroplast"/>
<evidence type="ECO:0000255" key="1">
    <source>
        <dbReference type="HAMAP-Rule" id="MF_00644"/>
    </source>
</evidence>
<feature type="chain" id="PRO_0000217724" description="Photosystem II reaction center protein Z">
    <location>
        <begin position="1"/>
        <end position="62"/>
    </location>
</feature>
<feature type="transmembrane region" description="Helical" evidence="1">
    <location>
        <begin position="8"/>
        <end position="28"/>
    </location>
</feature>
<feature type="transmembrane region" description="Helical" evidence="1">
    <location>
        <begin position="41"/>
        <end position="61"/>
    </location>
</feature>
<comment type="function">
    <text evidence="1">May control the interaction of photosystem II (PSII) cores with the light-harvesting antenna, regulates electron flow through the 2 photosystem reaction centers. PSII is a light-driven water plastoquinone oxidoreductase, using light energy to abstract electrons from H(2)O, generating a proton gradient subsequently used for ATP formation.</text>
</comment>
<comment type="subunit">
    <text evidence="1">PSII is composed of 1 copy each of membrane proteins PsbA, PsbB, PsbC, PsbD, PsbE, PsbF, PsbH, PsbI, PsbJ, PsbK, PsbL, PsbM, PsbT, PsbX, PsbY, PsbZ, Psb30/Ycf12, at least 3 peripheral proteins of the oxygen-evolving complex and a large number of cofactors. It forms dimeric complexes.</text>
</comment>
<comment type="subcellular location">
    <subcellularLocation>
        <location evidence="1">Plastid</location>
        <location evidence="1">Chloroplast thylakoid membrane</location>
        <topology evidence="1">Multi-pass membrane protein</topology>
    </subcellularLocation>
</comment>
<comment type="similarity">
    <text evidence="1">Belongs to the PsbZ family.</text>
</comment>
<dbReference type="EMBL" id="U38804">
    <property type="protein sequence ID" value="AAC08202.1"/>
    <property type="molecule type" value="Genomic_DNA"/>
</dbReference>
<dbReference type="PIR" id="S73237">
    <property type="entry name" value="S73237"/>
</dbReference>
<dbReference type="RefSeq" id="NP_053926.1">
    <property type="nucleotide sequence ID" value="NC_000925.1"/>
</dbReference>
<dbReference type="SMR" id="P51316"/>
<dbReference type="GeneID" id="809945"/>
<dbReference type="GO" id="GO:0009535">
    <property type="term" value="C:chloroplast thylakoid membrane"/>
    <property type="evidence" value="ECO:0007669"/>
    <property type="project" value="UniProtKB-SubCell"/>
</dbReference>
<dbReference type="GO" id="GO:0009539">
    <property type="term" value="C:photosystem II reaction center"/>
    <property type="evidence" value="ECO:0007669"/>
    <property type="project" value="InterPro"/>
</dbReference>
<dbReference type="GO" id="GO:0015979">
    <property type="term" value="P:photosynthesis"/>
    <property type="evidence" value="ECO:0007669"/>
    <property type="project" value="UniProtKB-UniRule"/>
</dbReference>
<dbReference type="GO" id="GO:0042549">
    <property type="term" value="P:photosystem II stabilization"/>
    <property type="evidence" value="ECO:0007669"/>
    <property type="project" value="InterPro"/>
</dbReference>
<dbReference type="Gene3D" id="1.10.287.740">
    <property type="entry name" value="Photosystem II PsbZ, reaction centre"/>
    <property type="match status" value="1"/>
</dbReference>
<dbReference type="HAMAP" id="MF_00644">
    <property type="entry name" value="PSII_PsbZ"/>
    <property type="match status" value="1"/>
</dbReference>
<dbReference type="InterPro" id="IPR002644">
    <property type="entry name" value="PSII_PsbZ"/>
</dbReference>
<dbReference type="InterPro" id="IPR036512">
    <property type="entry name" value="PSII_PsbZ_sf"/>
</dbReference>
<dbReference type="NCBIfam" id="TIGR03043">
    <property type="entry name" value="PS_II_psbZ"/>
    <property type="match status" value="1"/>
</dbReference>
<dbReference type="PANTHER" id="PTHR34971">
    <property type="entry name" value="PHOTOSYSTEM II REACTION CENTER PROTEIN Z"/>
    <property type="match status" value="1"/>
</dbReference>
<dbReference type="PANTHER" id="PTHR34971:SF2">
    <property type="entry name" value="PHOTOSYSTEM II REACTION CENTER PROTEIN Z"/>
    <property type="match status" value="1"/>
</dbReference>
<dbReference type="Pfam" id="PF01737">
    <property type="entry name" value="Ycf9"/>
    <property type="match status" value="1"/>
</dbReference>
<dbReference type="SUPFAM" id="SSF161055">
    <property type="entry name" value="PsbZ-like"/>
    <property type="match status" value="1"/>
</dbReference>
<reference key="1">
    <citation type="journal article" date="1995" name="Plant Mol. Biol. Rep.">
        <title>Complete nucleotide sequence of the Porphyra purpurea chloroplast genome.</title>
        <authorList>
            <person name="Reith M.E."/>
            <person name="Munholland J."/>
        </authorList>
    </citation>
    <scope>NUCLEOTIDE SEQUENCE [LARGE SCALE GENOMIC DNA]</scope>
    <source>
        <strain>Avonport</strain>
    </source>
</reference>
<accession>P51316</accession>
<sequence>MIIAIQLLVLLLITLSTILVVGVPVVLASPGQWEQSKGLIYTGAGLWTGLVIVTSLVNSLVV</sequence>